<reference key="1">
    <citation type="journal article" date="2007" name="Proc. Natl. Acad. Sci. U.S.A.">
        <title>The genome of Syntrophus aciditrophicus: life at the thermodynamic limit of microbial growth.</title>
        <authorList>
            <person name="McInerney M.J."/>
            <person name="Rohlin L."/>
            <person name="Mouttaki H."/>
            <person name="Kim U."/>
            <person name="Krupp R.S."/>
            <person name="Rios-Hernandez L."/>
            <person name="Sieber J."/>
            <person name="Struchtemeyer C.G."/>
            <person name="Bhattacharyya A."/>
            <person name="Campbell J.W."/>
            <person name="Gunsalus R.P."/>
        </authorList>
    </citation>
    <scope>NUCLEOTIDE SEQUENCE [LARGE SCALE GENOMIC DNA]</scope>
    <source>
        <strain>SB</strain>
    </source>
</reference>
<keyword id="KW-1185">Reference proteome</keyword>
<sequence>MIFRMTQNLRTGKLGEQMAAAYLEEAGYRILEQNYRCRFGEIDIIARDGDTIVFVEVKSRRSDKYGLPQLAVGPDKQMRISKISLFYLQTKRLDSYNARFDVVAVSLKPEGCRIELIKDAFELAYGR</sequence>
<organism>
    <name type="scientific">Syntrophus aciditrophicus (strain SB)</name>
    <dbReference type="NCBI Taxonomy" id="56780"/>
    <lineage>
        <taxon>Bacteria</taxon>
        <taxon>Pseudomonadati</taxon>
        <taxon>Thermodesulfobacteriota</taxon>
        <taxon>Syntrophia</taxon>
        <taxon>Syntrophales</taxon>
        <taxon>Syntrophaceae</taxon>
        <taxon>Syntrophus</taxon>
    </lineage>
</organism>
<feature type="chain" id="PRO_1000009271" description="UPF0102 protein SYNAS_23220">
    <location>
        <begin position="1"/>
        <end position="127"/>
    </location>
</feature>
<proteinExistence type="inferred from homology"/>
<protein>
    <recommendedName>
        <fullName evidence="1">UPF0102 protein SYNAS_23220</fullName>
    </recommendedName>
</protein>
<accession>Q2LVT7</accession>
<gene>
    <name type="ordered locus">SYNAS_23220</name>
    <name type="ORF">SYN_00772</name>
</gene>
<evidence type="ECO:0000255" key="1">
    <source>
        <dbReference type="HAMAP-Rule" id="MF_00048"/>
    </source>
</evidence>
<comment type="similarity">
    <text evidence="1">Belongs to the UPF0102 family.</text>
</comment>
<dbReference type="EMBL" id="CP000252">
    <property type="protein sequence ID" value="ABC78201.1"/>
    <property type="molecule type" value="Genomic_DNA"/>
</dbReference>
<dbReference type="SMR" id="Q2LVT7"/>
<dbReference type="FunCoup" id="Q2LVT7">
    <property type="interactions" value="253"/>
</dbReference>
<dbReference type="STRING" id="56780.SYN_00772"/>
<dbReference type="KEGG" id="sat:SYN_00772"/>
<dbReference type="eggNOG" id="COG0792">
    <property type="taxonomic scope" value="Bacteria"/>
</dbReference>
<dbReference type="HOGENOM" id="CLU_115353_1_1_7"/>
<dbReference type="InParanoid" id="Q2LVT7"/>
<dbReference type="OrthoDB" id="9794876at2"/>
<dbReference type="Proteomes" id="UP000001933">
    <property type="component" value="Chromosome"/>
</dbReference>
<dbReference type="GO" id="GO:0003676">
    <property type="term" value="F:nucleic acid binding"/>
    <property type="evidence" value="ECO:0007669"/>
    <property type="project" value="InterPro"/>
</dbReference>
<dbReference type="CDD" id="cd20736">
    <property type="entry name" value="PoNe_Nuclease"/>
    <property type="match status" value="1"/>
</dbReference>
<dbReference type="Gene3D" id="3.40.1350.10">
    <property type="match status" value="1"/>
</dbReference>
<dbReference type="HAMAP" id="MF_00048">
    <property type="entry name" value="UPF0102"/>
    <property type="match status" value="1"/>
</dbReference>
<dbReference type="InterPro" id="IPR011335">
    <property type="entry name" value="Restrct_endonuc-II-like"/>
</dbReference>
<dbReference type="InterPro" id="IPR011856">
    <property type="entry name" value="tRNA_endonuc-like_dom_sf"/>
</dbReference>
<dbReference type="InterPro" id="IPR003509">
    <property type="entry name" value="UPF0102_YraN-like"/>
</dbReference>
<dbReference type="NCBIfam" id="NF009150">
    <property type="entry name" value="PRK12497.1-3"/>
    <property type="match status" value="1"/>
</dbReference>
<dbReference type="NCBIfam" id="NF009154">
    <property type="entry name" value="PRK12497.3-3"/>
    <property type="match status" value="1"/>
</dbReference>
<dbReference type="NCBIfam" id="TIGR00252">
    <property type="entry name" value="YraN family protein"/>
    <property type="match status" value="1"/>
</dbReference>
<dbReference type="PANTHER" id="PTHR34039">
    <property type="entry name" value="UPF0102 PROTEIN YRAN"/>
    <property type="match status" value="1"/>
</dbReference>
<dbReference type="PANTHER" id="PTHR34039:SF1">
    <property type="entry name" value="UPF0102 PROTEIN YRAN"/>
    <property type="match status" value="1"/>
</dbReference>
<dbReference type="Pfam" id="PF02021">
    <property type="entry name" value="UPF0102"/>
    <property type="match status" value="1"/>
</dbReference>
<dbReference type="SUPFAM" id="SSF52980">
    <property type="entry name" value="Restriction endonuclease-like"/>
    <property type="match status" value="1"/>
</dbReference>
<name>Y2322_SYNAS</name>